<organism>
    <name type="scientific">Huperzia lucidula</name>
    <name type="common">Shining clubmoss</name>
    <name type="synonym">Lycopodium lucidulum</name>
    <dbReference type="NCBI Taxonomy" id="37429"/>
    <lineage>
        <taxon>Eukaryota</taxon>
        <taxon>Viridiplantae</taxon>
        <taxon>Streptophyta</taxon>
        <taxon>Embryophyta</taxon>
        <taxon>Tracheophyta</taxon>
        <taxon>Lycopodiopsida</taxon>
        <taxon>Lycopodiales</taxon>
        <taxon>Lycopodiaceae</taxon>
        <taxon>Huperzioideae</taxon>
        <taxon>Huperzia</taxon>
    </lineage>
</organism>
<proteinExistence type="inferred from homology"/>
<sequence>MKNVIDFVIISGYWPPAGGFGLNANLLETNLINSGVVLGLPVYSGKGVLSNLLNNRKQTILSTIRDAEERYEEATDKLKQARTRLQQAKIKADEIRINGLSRMEGEKQDLVDSADGNSKRLEDSKNATIRFEEQRAIEQVRQQVSRLALERALEVLNIRLNSELQSRMIDYHIDLLVRAAENTTD</sequence>
<comment type="function">
    <text evidence="1">F(1)F(0) ATP synthase produces ATP from ADP in the presence of a proton or sodium gradient. F-type ATPases consist of two structural domains, F(1) containing the extramembraneous catalytic core and F(0) containing the membrane proton channel, linked together by a central stalk and a peripheral stalk. During catalysis, ATP synthesis in the catalytic domain of F(1) is coupled via a rotary mechanism of the central stalk subunits to proton translocation.</text>
</comment>
<comment type="function">
    <text evidence="1">Component of the F(0) channel, it forms part of the peripheral stalk, linking F(1) to F(0).</text>
</comment>
<comment type="subunit">
    <text evidence="1">F-type ATPases have 2 components, F(1) - the catalytic core - and F(0) - the membrane proton channel. F(1) has five subunits: alpha(3), beta(3), gamma(1), delta(1), epsilon(1). F(0) has four main subunits: a(1), b(1), b'(1) and c(10-14). The alpha and beta chains form an alternating ring which encloses part of the gamma chain. F(1) is attached to F(0) by a central stalk formed by the gamma and epsilon chains, while a peripheral stalk is formed by the delta, b and b' chains.</text>
</comment>
<comment type="subcellular location">
    <subcellularLocation>
        <location evidence="1">Plastid</location>
        <location evidence="1">Chloroplast thylakoid membrane</location>
        <topology evidence="1">Single-pass membrane protein</topology>
    </subcellularLocation>
</comment>
<comment type="miscellaneous">
    <text>In plastids the F-type ATPase is also known as CF(1)CF(0).</text>
</comment>
<comment type="similarity">
    <text evidence="1">Belongs to the ATPase B chain family.</text>
</comment>
<accession>Q5SCX5</accession>
<protein>
    <recommendedName>
        <fullName evidence="1">ATP synthase subunit b, chloroplastic</fullName>
    </recommendedName>
    <alternativeName>
        <fullName evidence="1">ATP synthase F(0) sector subunit b</fullName>
    </alternativeName>
    <alternativeName>
        <fullName evidence="1">ATPase subunit I</fullName>
    </alternativeName>
</protein>
<geneLocation type="chloroplast"/>
<dbReference type="EMBL" id="AY660566">
    <property type="protein sequence ID" value="AAT80741.1"/>
    <property type="molecule type" value="Genomic_DNA"/>
</dbReference>
<dbReference type="RefSeq" id="YP_209545.1">
    <property type="nucleotide sequence ID" value="NC_006861.1"/>
</dbReference>
<dbReference type="SMR" id="Q5SCX5"/>
<dbReference type="GeneID" id="3283724"/>
<dbReference type="GO" id="GO:0009535">
    <property type="term" value="C:chloroplast thylakoid membrane"/>
    <property type="evidence" value="ECO:0007669"/>
    <property type="project" value="UniProtKB-SubCell"/>
</dbReference>
<dbReference type="GO" id="GO:0045259">
    <property type="term" value="C:proton-transporting ATP synthase complex"/>
    <property type="evidence" value="ECO:0007669"/>
    <property type="project" value="UniProtKB-KW"/>
</dbReference>
<dbReference type="GO" id="GO:0046933">
    <property type="term" value="F:proton-transporting ATP synthase activity, rotational mechanism"/>
    <property type="evidence" value="ECO:0007669"/>
    <property type="project" value="UniProtKB-UniRule"/>
</dbReference>
<dbReference type="CDD" id="cd06503">
    <property type="entry name" value="ATP-synt_Fo_b"/>
    <property type="match status" value="1"/>
</dbReference>
<dbReference type="HAMAP" id="MF_01398">
    <property type="entry name" value="ATP_synth_b_bprime"/>
    <property type="match status" value="1"/>
</dbReference>
<dbReference type="InterPro" id="IPR002146">
    <property type="entry name" value="ATP_synth_b/b'su_bac/chlpt"/>
</dbReference>
<dbReference type="NCBIfam" id="NF005606">
    <property type="entry name" value="PRK07352.1"/>
    <property type="match status" value="1"/>
</dbReference>
<dbReference type="PANTHER" id="PTHR34264">
    <property type="entry name" value="ATP SYNTHASE SUBUNIT B, CHLOROPLASTIC"/>
    <property type="match status" value="1"/>
</dbReference>
<dbReference type="PANTHER" id="PTHR34264:SF3">
    <property type="entry name" value="ATP SYNTHASE SUBUNIT B, CHLOROPLASTIC"/>
    <property type="match status" value="1"/>
</dbReference>
<dbReference type="Pfam" id="PF00430">
    <property type="entry name" value="ATP-synt_B"/>
    <property type="match status" value="1"/>
</dbReference>
<evidence type="ECO:0000255" key="1">
    <source>
        <dbReference type="HAMAP-Rule" id="MF_01398"/>
    </source>
</evidence>
<keyword id="KW-0066">ATP synthesis</keyword>
<keyword id="KW-0138">CF(0)</keyword>
<keyword id="KW-0150">Chloroplast</keyword>
<keyword id="KW-0375">Hydrogen ion transport</keyword>
<keyword id="KW-0406">Ion transport</keyword>
<keyword id="KW-0472">Membrane</keyword>
<keyword id="KW-0934">Plastid</keyword>
<keyword id="KW-0793">Thylakoid</keyword>
<keyword id="KW-0812">Transmembrane</keyword>
<keyword id="KW-1133">Transmembrane helix</keyword>
<keyword id="KW-0813">Transport</keyword>
<reference key="1">
    <citation type="journal article" date="2005" name="Gene">
        <title>The first complete chloroplast genome sequence of a lycophyte, Huperzia lucidula (Lycopodiaceae).</title>
        <authorList>
            <person name="Wolf P.G."/>
            <person name="Karol K.G."/>
            <person name="Mandoli D.F."/>
            <person name="Kuehl J.V."/>
            <person name="Arumuganathan K."/>
            <person name="Ellis M.W."/>
            <person name="Mishler B.D."/>
            <person name="Kelch D.G."/>
            <person name="Olmstead R.G."/>
            <person name="Boore J.L."/>
        </authorList>
    </citation>
    <scope>NUCLEOTIDE SEQUENCE [LARGE SCALE GENOMIC DNA]</scope>
</reference>
<name>ATPF_HUPLU</name>
<feature type="chain" id="PRO_0000368940" description="ATP synthase subunit b, chloroplastic">
    <location>
        <begin position="1"/>
        <end position="185"/>
    </location>
</feature>
<feature type="transmembrane region" description="Helical" evidence="1">
    <location>
        <begin position="31"/>
        <end position="49"/>
    </location>
</feature>
<gene>
    <name evidence="1" type="primary">atpF</name>
</gene>